<evidence type="ECO:0000255" key="1">
    <source>
        <dbReference type="HAMAP-Rule" id="MF_00137"/>
    </source>
</evidence>
<keyword id="KW-0067">ATP-binding</keyword>
<keyword id="KW-0436">Ligase</keyword>
<keyword id="KW-0547">Nucleotide-binding</keyword>
<keyword id="KW-0658">Purine biosynthesis</keyword>
<feature type="chain" id="PRO_1000096032" description="Phosphoribosylaminoimidazole-succinocarboxamide synthase">
    <location>
        <begin position="1"/>
        <end position="237"/>
    </location>
</feature>
<gene>
    <name evidence="1" type="primary">purC</name>
    <name type="ordered locus">YpAngola_A3135</name>
</gene>
<dbReference type="EC" id="6.3.2.6" evidence="1"/>
<dbReference type="EMBL" id="CP000901">
    <property type="protein sequence ID" value="ABX88485.1"/>
    <property type="molecule type" value="Genomic_DNA"/>
</dbReference>
<dbReference type="RefSeq" id="WP_002208555.1">
    <property type="nucleotide sequence ID" value="NZ_CP009935.1"/>
</dbReference>
<dbReference type="SMR" id="A9R2H1"/>
<dbReference type="GeneID" id="57975643"/>
<dbReference type="KEGG" id="ypg:YpAngola_A3135"/>
<dbReference type="PATRIC" id="fig|349746.12.peg.4195"/>
<dbReference type="UniPathway" id="UPA00074">
    <property type="reaction ID" value="UER00131"/>
</dbReference>
<dbReference type="GO" id="GO:0005829">
    <property type="term" value="C:cytosol"/>
    <property type="evidence" value="ECO:0007669"/>
    <property type="project" value="TreeGrafter"/>
</dbReference>
<dbReference type="GO" id="GO:0005524">
    <property type="term" value="F:ATP binding"/>
    <property type="evidence" value="ECO:0007669"/>
    <property type="project" value="UniProtKB-KW"/>
</dbReference>
<dbReference type="GO" id="GO:0004639">
    <property type="term" value="F:phosphoribosylaminoimidazolesuccinocarboxamide synthase activity"/>
    <property type="evidence" value="ECO:0007669"/>
    <property type="project" value="UniProtKB-UniRule"/>
</dbReference>
<dbReference type="GO" id="GO:0006189">
    <property type="term" value="P:'de novo' IMP biosynthetic process"/>
    <property type="evidence" value="ECO:0007669"/>
    <property type="project" value="UniProtKB-UniRule"/>
</dbReference>
<dbReference type="GO" id="GO:0009236">
    <property type="term" value="P:cobalamin biosynthetic process"/>
    <property type="evidence" value="ECO:0007669"/>
    <property type="project" value="InterPro"/>
</dbReference>
<dbReference type="CDD" id="cd01415">
    <property type="entry name" value="SAICAR_synt_PurC"/>
    <property type="match status" value="1"/>
</dbReference>
<dbReference type="FunFam" id="3.30.200.20:FF:000086">
    <property type="entry name" value="Phosphoribosylaminoimidazole-succinocarboxamide synthase"/>
    <property type="match status" value="1"/>
</dbReference>
<dbReference type="FunFam" id="3.30.470.20:FF:000006">
    <property type="entry name" value="Phosphoribosylaminoimidazole-succinocarboxamide synthase"/>
    <property type="match status" value="1"/>
</dbReference>
<dbReference type="Gene3D" id="3.30.470.20">
    <property type="entry name" value="ATP-grasp fold, B domain"/>
    <property type="match status" value="1"/>
</dbReference>
<dbReference type="Gene3D" id="3.30.200.20">
    <property type="entry name" value="Phosphorylase Kinase, domain 1"/>
    <property type="match status" value="1"/>
</dbReference>
<dbReference type="HAMAP" id="MF_00137">
    <property type="entry name" value="SAICAR_synth"/>
    <property type="match status" value="1"/>
</dbReference>
<dbReference type="InterPro" id="IPR028923">
    <property type="entry name" value="SAICAR_synt/ADE2_N"/>
</dbReference>
<dbReference type="InterPro" id="IPR033934">
    <property type="entry name" value="SAICAR_synt_PurC"/>
</dbReference>
<dbReference type="InterPro" id="IPR001636">
    <property type="entry name" value="SAICAR_synth"/>
</dbReference>
<dbReference type="InterPro" id="IPR050089">
    <property type="entry name" value="SAICAR_synthetase"/>
</dbReference>
<dbReference type="InterPro" id="IPR018236">
    <property type="entry name" value="SAICAR_synthetase_CS"/>
</dbReference>
<dbReference type="NCBIfam" id="TIGR00081">
    <property type="entry name" value="purC"/>
    <property type="match status" value="1"/>
</dbReference>
<dbReference type="PANTHER" id="PTHR43599">
    <property type="entry name" value="MULTIFUNCTIONAL PROTEIN ADE2"/>
    <property type="match status" value="1"/>
</dbReference>
<dbReference type="PANTHER" id="PTHR43599:SF3">
    <property type="entry name" value="SI:DKEY-6E2.2"/>
    <property type="match status" value="1"/>
</dbReference>
<dbReference type="Pfam" id="PF01259">
    <property type="entry name" value="SAICAR_synt"/>
    <property type="match status" value="1"/>
</dbReference>
<dbReference type="SUPFAM" id="SSF56104">
    <property type="entry name" value="SAICAR synthase-like"/>
    <property type="match status" value="1"/>
</dbReference>
<dbReference type="PROSITE" id="PS01057">
    <property type="entry name" value="SAICAR_SYNTHETASE_1"/>
    <property type="match status" value="1"/>
</dbReference>
<dbReference type="PROSITE" id="PS01058">
    <property type="entry name" value="SAICAR_SYNTHETASE_2"/>
    <property type="match status" value="1"/>
</dbReference>
<accession>A9R2H1</accession>
<sequence length="237" mass="27030">MQKLAELYRGKAKTVYTTENPDLLVLEFRNDTSALDGQRIEQFDRKGMVNNKFNHFIMTKLEEAGIPTQMERLLSDTEVLVKKLEMIPVECVIRNRAAGSLVKRLGIEEGLSLNPPLFDLFLKNDAMHDPMVNESYCKTFGWATEAQLARMKELSYLANDVLSKLFDDAGLILVDFKLEFGLFNGEVVLGDEFSPDGSRLWDKKTLNKMDKDRYRQSLGGLIEAYEEVAHRIGVKLD</sequence>
<organism>
    <name type="scientific">Yersinia pestis bv. Antiqua (strain Angola)</name>
    <dbReference type="NCBI Taxonomy" id="349746"/>
    <lineage>
        <taxon>Bacteria</taxon>
        <taxon>Pseudomonadati</taxon>
        <taxon>Pseudomonadota</taxon>
        <taxon>Gammaproteobacteria</taxon>
        <taxon>Enterobacterales</taxon>
        <taxon>Yersiniaceae</taxon>
        <taxon>Yersinia</taxon>
    </lineage>
</organism>
<comment type="catalytic activity">
    <reaction evidence="1">
        <text>5-amino-1-(5-phospho-D-ribosyl)imidazole-4-carboxylate + L-aspartate + ATP = (2S)-2-[5-amino-1-(5-phospho-beta-D-ribosyl)imidazole-4-carboxamido]succinate + ADP + phosphate + 2 H(+)</text>
        <dbReference type="Rhea" id="RHEA:22628"/>
        <dbReference type="ChEBI" id="CHEBI:15378"/>
        <dbReference type="ChEBI" id="CHEBI:29991"/>
        <dbReference type="ChEBI" id="CHEBI:30616"/>
        <dbReference type="ChEBI" id="CHEBI:43474"/>
        <dbReference type="ChEBI" id="CHEBI:58443"/>
        <dbReference type="ChEBI" id="CHEBI:77657"/>
        <dbReference type="ChEBI" id="CHEBI:456216"/>
        <dbReference type="EC" id="6.3.2.6"/>
    </reaction>
</comment>
<comment type="pathway">
    <text evidence="1">Purine metabolism; IMP biosynthesis via de novo pathway; 5-amino-1-(5-phospho-D-ribosyl)imidazole-4-carboxamide from 5-amino-1-(5-phospho-D-ribosyl)imidazole-4-carboxylate: step 1/2.</text>
</comment>
<comment type="similarity">
    <text evidence="1">Belongs to the SAICAR synthetase family.</text>
</comment>
<reference key="1">
    <citation type="journal article" date="2010" name="J. Bacteriol.">
        <title>Genome sequence of the deep-rooted Yersinia pestis strain Angola reveals new insights into the evolution and pangenome of the plague bacterium.</title>
        <authorList>
            <person name="Eppinger M."/>
            <person name="Worsham P.L."/>
            <person name="Nikolich M.P."/>
            <person name="Riley D.R."/>
            <person name="Sebastian Y."/>
            <person name="Mou S."/>
            <person name="Achtman M."/>
            <person name="Lindler L.E."/>
            <person name="Ravel J."/>
        </authorList>
    </citation>
    <scope>NUCLEOTIDE SEQUENCE [LARGE SCALE GENOMIC DNA]</scope>
    <source>
        <strain>Angola</strain>
    </source>
</reference>
<proteinExistence type="inferred from homology"/>
<protein>
    <recommendedName>
        <fullName evidence="1">Phosphoribosylaminoimidazole-succinocarboxamide synthase</fullName>
        <ecNumber evidence="1">6.3.2.6</ecNumber>
    </recommendedName>
    <alternativeName>
        <fullName evidence="1">SAICAR synthetase</fullName>
    </alternativeName>
</protein>
<name>PUR7_YERPG</name>